<name>SYT_BORHD</name>
<evidence type="ECO:0000255" key="1">
    <source>
        <dbReference type="HAMAP-Rule" id="MF_00184"/>
    </source>
</evidence>
<dbReference type="EC" id="6.1.1.3" evidence="1"/>
<dbReference type="EMBL" id="CP000048">
    <property type="protein sequence ID" value="AAX17218.1"/>
    <property type="molecule type" value="Genomic_DNA"/>
</dbReference>
<dbReference type="RefSeq" id="WP_012422468.1">
    <property type="nucleotide sequence ID" value="NZ_CP073136.1"/>
</dbReference>
<dbReference type="SMR" id="B2S162"/>
<dbReference type="KEGG" id="bhr:BH0720"/>
<dbReference type="HOGENOM" id="CLU_008554_0_1_12"/>
<dbReference type="Proteomes" id="UP000008834">
    <property type="component" value="Chromosome"/>
</dbReference>
<dbReference type="GO" id="GO:0005737">
    <property type="term" value="C:cytoplasm"/>
    <property type="evidence" value="ECO:0007669"/>
    <property type="project" value="UniProtKB-SubCell"/>
</dbReference>
<dbReference type="GO" id="GO:0005524">
    <property type="term" value="F:ATP binding"/>
    <property type="evidence" value="ECO:0007669"/>
    <property type="project" value="UniProtKB-UniRule"/>
</dbReference>
<dbReference type="GO" id="GO:0046872">
    <property type="term" value="F:metal ion binding"/>
    <property type="evidence" value="ECO:0007669"/>
    <property type="project" value="UniProtKB-KW"/>
</dbReference>
<dbReference type="GO" id="GO:0004829">
    <property type="term" value="F:threonine-tRNA ligase activity"/>
    <property type="evidence" value="ECO:0007669"/>
    <property type="project" value="UniProtKB-UniRule"/>
</dbReference>
<dbReference type="GO" id="GO:0000049">
    <property type="term" value="F:tRNA binding"/>
    <property type="evidence" value="ECO:0007669"/>
    <property type="project" value="UniProtKB-KW"/>
</dbReference>
<dbReference type="GO" id="GO:0006435">
    <property type="term" value="P:threonyl-tRNA aminoacylation"/>
    <property type="evidence" value="ECO:0007669"/>
    <property type="project" value="UniProtKB-UniRule"/>
</dbReference>
<dbReference type="CDD" id="cd00860">
    <property type="entry name" value="ThrRS_anticodon"/>
    <property type="match status" value="1"/>
</dbReference>
<dbReference type="CDD" id="cd00771">
    <property type="entry name" value="ThrRS_core"/>
    <property type="match status" value="1"/>
</dbReference>
<dbReference type="FunFam" id="3.30.930.10:FF:000002">
    <property type="entry name" value="Threonine--tRNA ligase"/>
    <property type="match status" value="1"/>
</dbReference>
<dbReference type="FunFam" id="3.40.50.800:FF:000001">
    <property type="entry name" value="Threonine--tRNA ligase"/>
    <property type="match status" value="1"/>
</dbReference>
<dbReference type="FunFam" id="3.30.980.10:FF:000005">
    <property type="entry name" value="Threonyl-tRNA synthetase, mitochondrial"/>
    <property type="match status" value="1"/>
</dbReference>
<dbReference type="Gene3D" id="3.30.54.20">
    <property type="match status" value="1"/>
</dbReference>
<dbReference type="Gene3D" id="3.40.50.800">
    <property type="entry name" value="Anticodon-binding domain"/>
    <property type="match status" value="1"/>
</dbReference>
<dbReference type="Gene3D" id="3.30.930.10">
    <property type="entry name" value="Bira Bifunctional Protein, Domain 2"/>
    <property type="match status" value="1"/>
</dbReference>
<dbReference type="Gene3D" id="3.30.980.10">
    <property type="entry name" value="Threonyl-trna Synthetase, Chain A, domain 2"/>
    <property type="match status" value="1"/>
</dbReference>
<dbReference type="HAMAP" id="MF_00184">
    <property type="entry name" value="Thr_tRNA_synth"/>
    <property type="match status" value="1"/>
</dbReference>
<dbReference type="InterPro" id="IPR002314">
    <property type="entry name" value="aa-tRNA-synt_IIb"/>
</dbReference>
<dbReference type="InterPro" id="IPR006195">
    <property type="entry name" value="aa-tRNA-synth_II"/>
</dbReference>
<dbReference type="InterPro" id="IPR045864">
    <property type="entry name" value="aa-tRNA-synth_II/BPL/LPL"/>
</dbReference>
<dbReference type="InterPro" id="IPR004154">
    <property type="entry name" value="Anticodon-bd"/>
</dbReference>
<dbReference type="InterPro" id="IPR036621">
    <property type="entry name" value="Anticodon-bd_dom_sf"/>
</dbReference>
<dbReference type="InterPro" id="IPR002320">
    <property type="entry name" value="Thr-tRNA-ligase_IIa"/>
</dbReference>
<dbReference type="InterPro" id="IPR018163">
    <property type="entry name" value="Thr/Ala-tRNA-synth_IIc_edit"/>
</dbReference>
<dbReference type="InterPro" id="IPR047246">
    <property type="entry name" value="ThrRS_anticodon"/>
</dbReference>
<dbReference type="InterPro" id="IPR033728">
    <property type="entry name" value="ThrRS_core"/>
</dbReference>
<dbReference type="InterPro" id="IPR012947">
    <property type="entry name" value="tRNA_SAD"/>
</dbReference>
<dbReference type="NCBIfam" id="TIGR00418">
    <property type="entry name" value="thrS"/>
    <property type="match status" value="1"/>
</dbReference>
<dbReference type="PANTHER" id="PTHR11451:SF44">
    <property type="entry name" value="THREONINE--TRNA LIGASE, CHLOROPLASTIC_MITOCHONDRIAL 2"/>
    <property type="match status" value="1"/>
</dbReference>
<dbReference type="PANTHER" id="PTHR11451">
    <property type="entry name" value="THREONINE-TRNA LIGASE"/>
    <property type="match status" value="1"/>
</dbReference>
<dbReference type="Pfam" id="PF03129">
    <property type="entry name" value="HGTP_anticodon"/>
    <property type="match status" value="1"/>
</dbReference>
<dbReference type="Pfam" id="PF00587">
    <property type="entry name" value="tRNA-synt_2b"/>
    <property type="match status" value="1"/>
</dbReference>
<dbReference type="Pfam" id="PF07973">
    <property type="entry name" value="tRNA_SAD"/>
    <property type="match status" value="1"/>
</dbReference>
<dbReference type="PRINTS" id="PR01047">
    <property type="entry name" value="TRNASYNTHTHR"/>
</dbReference>
<dbReference type="SMART" id="SM00863">
    <property type="entry name" value="tRNA_SAD"/>
    <property type="match status" value="1"/>
</dbReference>
<dbReference type="SUPFAM" id="SSF52954">
    <property type="entry name" value="Class II aaRS ABD-related"/>
    <property type="match status" value="1"/>
</dbReference>
<dbReference type="SUPFAM" id="SSF55681">
    <property type="entry name" value="Class II aaRS and biotin synthetases"/>
    <property type="match status" value="1"/>
</dbReference>
<dbReference type="SUPFAM" id="SSF55186">
    <property type="entry name" value="ThrRS/AlaRS common domain"/>
    <property type="match status" value="1"/>
</dbReference>
<dbReference type="PROSITE" id="PS50862">
    <property type="entry name" value="AA_TRNA_LIGASE_II"/>
    <property type="match status" value="1"/>
</dbReference>
<accession>B2S162</accession>
<gene>
    <name evidence="1" type="primary">thrS</name>
    <name type="ordered locus">BH0720</name>
</gene>
<organism>
    <name type="scientific">Borrelia hermsii (strain HS1 / DAH)</name>
    <dbReference type="NCBI Taxonomy" id="314723"/>
    <lineage>
        <taxon>Bacteria</taxon>
        <taxon>Pseudomonadati</taxon>
        <taxon>Spirochaetota</taxon>
        <taxon>Spirochaetia</taxon>
        <taxon>Spirochaetales</taxon>
        <taxon>Borreliaceae</taxon>
        <taxon>Borrelia</taxon>
    </lineage>
</organism>
<sequence>MSEKLDRESILYKKRHSIAHVMAEAVLELFPNTKIAIGPPIKDGFYYDFDFEKHITEDDLLLIEQKMREILKTGSPFVKEVITKEQALMLFKDEPYKMDLIRGLAITDEISIYKSHNFTDLCKGPHVDNMGKIDPKAFKLTSIAGAYWRGDEKNKMLTRIYGTLWNNEKDLKAYLKLREEIKRRDHRKLGRELDLFSVHEDIGPGLIFFHPNGARIRAIIEDFWREEHFKNGYDVLFTPHIGKSCLWETSGHLDFYKESMFEKMEMDKSNYYVKPMNCPFHIAIYNTGKHSYRDLPFRWAELGTVYRYEKIGALHGTMRVRGFTQDDAHIICAYEQVKSEVQEVLRFALYMWNQFGFADLKAYLSTKPEKAVGDKDDWEMSVKVLEEALIDLNIAYDIDEGGGAFYGPKIDLKIIDSLGREWQMSTIQFDFNLPERFKMTYTAEDGKEKRPFMIHRALLGSIERFFGILVEHYGGAFPVWLAPLQVIIIPVNNVVEEYALEILSLFKNEGIRIKLDNDCNMRMNAKIRQYQSKKVPYMFIIGEKEVVEGKISIRTRTNDQINGLELKEALEFVRLKVKNKEIL</sequence>
<reference key="1">
    <citation type="submission" date="2004-12" db="EMBL/GenBank/DDBJ databases">
        <title>The genome sequence of Borrelia hermsii and Borrelia turicatae: comparative analysis of two agents of endemic N. America relapsing fever.</title>
        <authorList>
            <person name="Porcella S.F."/>
            <person name="Raffel S.J."/>
            <person name="Schrumpf M.E."/>
            <person name="Montgomery B."/>
            <person name="Smith T."/>
            <person name="Schwan T.G."/>
        </authorList>
    </citation>
    <scope>NUCLEOTIDE SEQUENCE [LARGE SCALE GENOMIC DNA]</scope>
    <source>
        <strain>HS1 / DAH</strain>
    </source>
</reference>
<protein>
    <recommendedName>
        <fullName evidence="1">Threonine--tRNA ligase</fullName>
        <ecNumber evidence="1">6.1.1.3</ecNumber>
    </recommendedName>
    <alternativeName>
        <fullName evidence="1">Threonyl-tRNA synthetase</fullName>
        <shortName evidence="1">ThrRS</shortName>
    </alternativeName>
</protein>
<feature type="chain" id="PRO_1000098544" description="Threonine--tRNA ligase">
    <location>
        <begin position="1"/>
        <end position="583"/>
    </location>
</feature>
<feature type="region of interest" description="Catalytic" evidence="1">
    <location>
        <begin position="185"/>
        <end position="478"/>
    </location>
</feature>
<feature type="binding site" evidence="1">
    <location>
        <position position="278"/>
    </location>
    <ligand>
        <name>Zn(2+)</name>
        <dbReference type="ChEBI" id="CHEBI:29105"/>
    </ligand>
</feature>
<feature type="binding site" evidence="1">
    <location>
        <position position="329"/>
    </location>
    <ligand>
        <name>Zn(2+)</name>
        <dbReference type="ChEBI" id="CHEBI:29105"/>
    </ligand>
</feature>
<feature type="binding site" evidence="1">
    <location>
        <position position="455"/>
    </location>
    <ligand>
        <name>Zn(2+)</name>
        <dbReference type="ChEBI" id="CHEBI:29105"/>
    </ligand>
</feature>
<comment type="function">
    <text evidence="1">Catalyzes the attachment of threonine to tRNA(Thr) in a two-step reaction: L-threonine is first activated by ATP to form Thr-AMP and then transferred to the acceptor end of tRNA(Thr). Also edits incorrectly charged L-seryl-tRNA(Thr).</text>
</comment>
<comment type="catalytic activity">
    <reaction evidence="1">
        <text>tRNA(Thr) + L-threonine + ATP = L-threonyl-tRNA(Thr) + AMP + diphosphate + H(+)</text>
        <dbReference type="Rhea" id="RHEA:24624"/>
        <dbReference type="Rhea" id="RHEA-COMP:9670"/>
        <dbReference type="Rhea" id="RHEA-COMP:9704"/>
        <dbReference type="ChEBI" id="CHEBI:15378"/>
        <dbReference type="ChEBI" id="CHEBI:30616"/>
        <dbReference type="ChEBI" id="CHEBI:33019"/>
        <dbReference type="ChEBI" id="CHEBI:57926"/>
        <dbReference type="ChEBI" id="CHEBI:78442"/>
        <dbReference type="ChEBI" id="CHEBI:78534"/>
        <dbReference type="ChEBI" id="CHEBI:456215"/>
        <dbReference type="EC" id="6.1.1.3"/>
    </reaction>
</comment>
<comment type="cofactor">
    <cofactor evidence="1">
        <name>Zn(2+)</name>
        <dbReference type="ChEBI" id="CHEBI:29105"/>
    </cofactor>
    <text evidence="1">Binds 1 zinc ion per subunit.</text>
</comment>
<comment type="subunit">
    <text evidence="1">Homodimer.</text>
</comment>
<comment type="subcellular location">
    <subcellularLocation>
        <location evidence="1">Cytoplasm</location>
    </subcellularLocation>
</comment>
<comment type="similarity">
    <text evidence="1">Belongs to the class-II aminoacyl-tRNA synthetase family.</text>
</comment>
<keyword id="KW-0030">Aminoacyl-tRNA synthetase</keyword>
<keyword id="KW-0067">ATP-binding</keyword>
<keyword id="KW-0963">Cytoplasm</keyword>
<keyword id="KW-0436">Ligase</keyword>
<keyword id="KW-0479">Metal-binding</keyword>
<keyword id="KW-0547">Nucleotide-binding</keyword>
<keyword id="KW-0648">Protein biosynthesis</keyword>
<keyword id="KW-0694">RNA-binding</keyword>
<keyword id="KW-0820">tRNA-binding</keyword>
<keyword id="KW-0862">Zinc</keyword>
<proteinExistence type="inferred from homology"/>